<dbReference type="EMBL" id="AM774415">
    <property type="protein sequence ID" value="CAP13704.1"/>
    <property type="molecule type" value="Genomic_DNA"/>
</dbReference>
<dbReference type="RefSeq" id="WP_010902723.1">
    <property type="nucleotide sequence ID" value="NC_010364.1"/>
</dbReference>
<dbReference type="SMR" id="B0R4N9"/>
<dbReference type="EnsemblBacteria" id="CAP13704">
    <property type="protein sequence ID" value="CAP13704"/>
    <property type="gene ID" value="OE_2474R"/>
</dbReference>
<dbReference type="GeneID" id="68693818"/>
<dbReference type="KEGG" id="hsl:OE_2474R"/>
<dbReference type="HOGENOM" id="CLU_648306_0_0_2"/>
<dbReference type="PhylomeDB" id="B0R4N9"/>
<dbReference type="Proteomes" id="UP000001321">
    <property type="component" value="Chromosome"/>
</dbReference>
<dbReference type="GO" id="GO:0005737">
    <property type="term" value="C:cytoplasm"/>
    <property type="evidence" value="ECO:0007669"/>
    <property type="project" value="UniProtKB-SubCell"/>
</dbReference>
<dbReference type="GO" id="GO:0016020">
    <property type="term" value="C:membrane"/>
    <property type="evidence" value="ECO:0007669"/>
    <property type="project" value="InterPro"/>
</dbReference>
<dbReference type="GO" id="GO:0004888">
    <property type="term" value="F:transmembrane signaling receptor activity"/>
    <property type="evidence" value="ECO:0007669"/>
    <property type="project" value="InterPro"/>
</dbReference>
<dbReference type="GO" id="GO:0006935">
    <property type="term" value="P:chemotaxis"/>
    <property type="evidence" value="ECO:0007669"/>
    <property type="project" value="UniProtKB-KW"/>
</dbReference>
<dbReference type="GO" id="GO:0007165">
    <property type="term" value="P:signal transduction"/>
    <property type="evidence" value="ECO:0007669"/>
    <property type="project" value="UniProtKB-KW"/>
</dbReference>
<dbReference type="CDD" id="cd11386">
    <property type="entry name" value="MCP_signal"/>
    <property type="match status" value="1"/>
</dbReference>
<dbReference type="Gene3D" id="1.10.287.950">
    <property type="entry name" value="Methyl-accepting chemotaxis protein"/>
    <property type="match status" value="1"/>
</dbReference>
<dbReference type="InterPro" id="IPR004090">
    <property type="entry name" value="Chemotax_Me-accpt_rcpt"/>
</dbReference>
<dbReference type="InterPro" id="IPR004089">
    <property type="entry name" value="MCPsignal_dom"/>
</dbReference>
<dbReference type="PANTHER" id="PTHR32089:SF112">
    <property type="entry name" value="LYSOZYME-LIKE PROTEIN-RELATED"/>
    <property type="match status" value="1"/>
</dbReference>
<dbReference type="PANTHER" id="PTHR32089">
    <property type="entry name" value="METHYL-ACCEPTING CHEMOTAXIS PROTEIN MCPB"/>
    <property type="match status" value="1"/>
</dbReference>
<dbReference type="Pfam" id="PF00015">
    <property type="entry name" value="MCPsignal"/>
    <property type="match status" value="1"/>
</dbReference>
<dbReference type="PRINTS" id="PR00260">
    <property type="entry name" value="CHEMTRNSDUCR"/>
</dbReference>
<dbReference type="SMART" id="SM00283">
    <property type="entry name" value="MA"/>
    <property type="match status" value="1"/>
</dbReference>
<dbReference type="SUPFAM" id="SSF58104">
    <property type="entry name" value="Methyl-accepting chemotaxis protein (MCP) signaling domain"/>
    <property type="match status" value="1"/>
</dbReference>
<dbReference type="PROSITE" id="PS50111">
    <property type="entry name" value="CHEMOTAXIS_TRANSDUC_2"/>
    <property type="match status" value="1"/>
</dbReference>
<evidence type="ECO:0000250" key="1"/>
<evidence type="ECO:0000255" key="2">
    <source>
        <dbReference type="PROSITE-ProRule" id="PRU00284"/>
    </source>
</evidence>
<evidence type="ECO:0000256" key="3">
    <source>
        <dbReference type="SAM" id="MobiDB-lite"/>
    </source>
</evidence>
<evidence type="ECO:0000269" key="4">
    <source>
    </source>
</evidence>
<evidence type="ECO:0000305" key="5"/>
<proteinExistence type="evidence at protein level"/>
<comment type="function">
    <text evidence="1">Potentially involved in chemo- or phototactic signal transduction.</text>
</comment>
<comment type="subcellular location">
    <subcellularLocation>
        <location evidence="5">Cytoplasm</location>
    </subcellularLocation>
</comment>
<comment type="PTM">
    <text evidence="4">Methylated by CheR.</text>
</comment>
<comment type="similarity">
    <text evidence="5">Belongs to the methyl-accepting chemotaxis (MCP) protein family.</text>
</comment>
<gene>
    <name type="primary">htr13</name>
    <name type="synonym">htrXIII</name>
    <name type="ordered locus">OE_2474R</name>
</gene>
<name>HTR13_HALS3</name>
<sequence length="423" mass="45015">MTGPDNSLTDPSASPSTPVASLRPTAEQLLPQQRDQLHAFIERVLADHPDHIVDCCVEYYTNTLPNGTAAYGDLLALLAATSADADAFTAAVTAIQSPLLSGDGPTDGPPAQESVTAHARVVAEDMSALRGRVAADDATATGSEATADEAAAVAELIERAREMNQNMEEIDRLAAQQSDNTDNLKAEISDISSAIEQIAASATEVNDRSDEAQSLATDGYERAVAVVEQVEAIHDGVTEVRHQTATLQDHTEAIDDIVEVINDIADQTNLLALNASIEAARADAGGEGFAVVADEVKSLAEESKTQAEEIEERVENIQVETRNAADTLVELETETEDSLEASTSSLDTFEEIKDLVTGVSTSLDEIKSGTERQTESSEELTMMIDEAARKADTISDEVASMADANHAQLQKLEAYQSESDQSR</sequence>
<feature type="chain" id="PRO_0000429081" description="Transducer protein Htr13">
    <location>
        <begin position="1"/>
        <end position="423"/>
    </location>
</feature>
<feature type="domain" description="Methyl-accepting transducer" evidence="2">
    <location>
        <begin position="152"/>
        <end position="388"/>
    </location>
</feature>
<feature type="region of interest" description="Disordered" evidence="3">
    <location>
        <begin position="1"/>
        <end position="21"/>
    </location>
</feature>
<feature type="compositionally biased region" description="Polar residues" evidence="3">
    <location>
        <begin position="1"/>
        <end position="19"/>
    </location>
</feature>
<keyword id="KW-0145">Chemotaxis</keyword>
<keyword id="KW-0963">Cytoplasm</keyword>
<keyword id="KW-0807">Transducer</keyword>
<accession>B0R4N9</accession>
<reference key="1">
    <citation type="journal article" date="2008" name="Genomics">
        <title>Evolution in the laboratory: the genome of Halobacterium salinarum strain R1 compared to that of strain NRC-1.</title>
        <authorList>
            <person name="Pfeiffer F."/>
            <person name="Schuster S.C."/>
            <person name="Broicher A."/>
            <person name="Falb M."/>
            <person name="Palm P."/>
            <person name="Rodewald K."/>
            <person name="Ruepp A."/>
            <person name="Soppa J."/>
            <person name="Tittor J."/>
            <person name="Oesterhelt D."/>
        </authorList>
    </citation>
    <scope>NUCLEOTIDE SEQUENCE [LARGE SCALE GENOMIC DNA]</scope>
    <source>
        <strain>ATCC 29341 / DSM 671 / R1</strain>
    </source>
</reference>
<reference key="2">
    <citation type="journal article" date="2008" name="J. Mol. Biol.">
        <title>Physiological sites of deamidation and methyl esterification in sensory transducers of Halobacterium salinarum.</title>
        <authorList>
            <person name="Koch M.K."/>
            <person name="Staudinger W.F."/>
            <person name="Siedler F."/>
            <person name="Oesterhelt D."/>
        </authorList>
    </citation>
    <scope>METHYLATION</scope>
    <source>
        <strain>R1 / S9</strain>
    </source>
</reference>
<protein>
    <recommendedName>
        <fullName>Transducer protein Htr13</fullName>
    </recommendedName>
</protein>
<organism>
    <name type="scientific">Halobacterium salinarum (strain ATCC 29341 / DSM 671 / R1)</name>
    <dbReference type="NCBI Taxonomy" id="478009"/>
    <lineage>
        <taxon>Archaea</taxon>
        <taxon>Methanobacteriati</taxon>
        <taxon>Methanobacteriota</taxon>
        <taxon>Stenosarchaea group</taxon>
        <taxon>Halobacteria</taxon>
        <taxon>Halobacteriales</taxon>
        <taxon>Halobacteriaceae</taxon>
        <taxon>Halobacterium</taxon>
        <taxon>Halobacterium salinarum NRC-34001</taxon>
    </lineage>
</organism>